<protein>
    <recommendedName>
        <fullName>Protein FAM24B</fullName>
    </recommendedName>
</protein>
<accession>Q8N5W8</accession>
<accession>Q5JPG1</accession>
<dbReference type="EMBL" id="AL832795">
    <property type="protein sequence ID" value="CAI46166.1"/>
    <property type="molecule type" value="Transcribed_RNA"/>
</dbReference>
<dbReference type="EMBL" id="CH471066">
    <property type="protein sequence ID" value="EAW49301.1"/>
    <property type="molecule type" value="Genomic_DNA"/>
</dbReference>
<dbReference type="EMBL" id="BC031343">
    <property type="protein sequence ID" value="AAH31343.1"/>
    <property type="molecule type" value="mRNA"/>
</dbReference>
<dbReference type="CCDS" id="CCDS31303.1"/>
<dbReference type="RefSeq" id="NP_001191293.1">
    <property type="nucleotide sequence ID" value="NM_001204364.1"/>
</dbReference>
<dbReference type="RefSeq" id="NP_689857.2">
    <property type="nucleotide sequence ID" value="NM_152644.3"/>
</dbReference>
<dbReference type="SMR" id="Q8N5W8"/>
<dbReference type="BioGRID" id="128226">
    <property type="interactions" value="60"/>
</dbReference>
<dbReference type="FunCoup" id="Q8N5W8">
    <property type="interactions" value="4"/>
</dbReference>
<dbReference type="IntAct" id="Q8N5W8">
    <property type="interactions" value="57"/>
</dbReference>
<dbReference type="STRING" id="9606.ENSP00000357894"/>
<dbReference type="iPTMnet" id="Q8N5W8"/>
<dbReference type="PhosphoSitePlus" id="Q8N5W8"/>
<dbReference type="BioMuta" id="FAM24B"/>
<dbReference type="DMDM" id="166897968"/>
<dbReference type="MassIVE" id="Q8N5W8"/>
<dbReference type="PaxDb" id="9606-ENSP00000357894"/>
<dbReference type="PeptideAtlas" id="Q8N5W8"/>
<dbReference type="ProteomicsDB" id="72103"/>
<dbReference type="Antibodypedia" id="62636">
    <property type="antibodies" value="21 antibodies from 9 providers"/>
</dbReference>
<dbReference type="DNASU" id="196792"/>
<dbReference type="Ensembl" id="ENST00000368896.1">
    <property type="protein sequence ID" value="ENSP00000357892.1"/>
    <property type="gene ID" value="ENSG00000213185.7"/>
</dbReference>
<dbReference type="Ensembl" id="ENST00000368898.8">
    <property type="protein sequence ID" value="ENSP00000357894.3"/>
    <property type="gene ID" value="ENSG00000213185.7"/>
</dbReference>
<dbReference type="GeneID" id="196792"/>
<dbReference type="KEGG" id="hsa:196792"/>
<dbReference type="MANE-Select" id="ENST00000368898.8">
    <property type="protein sequence ID" value="ENSP00000357894.3"/>
    <property type="RefSeq nucleotide sequence ID" value="NM_152644.3"/>
    <property type="RefSeq protein sequence ID" value="NP_689857.2"/>
</dbReference>
<dbReference type="UCSC" id="uc001lgt.4">
    <property type="organism name" value="human"/>
</dbReference>
<dbReference type="AGR" id="HGNC:23475"/>
<dbReference type="CTD" id="196792"/>
<dbReference type="DisGeNET" id="196792"/>
<dbReference type="GeneCards" id="FAM24B"/>
<dbReference type="HGNC" id="HGNC:23475">
    <property type="gene designation" value="FAM24B"/>
</dbReference>
<dbReference type="HPA" id="ENSG00000213185">
    <property type="expression patterns" value="Tissue enhanced (kidney)"/>
</dbReference>
<dbReference type="neXtProt" id="NX_Q8N5W8"/>
<dbReference type="OpenTargets" id="ENSG00000213185"/>
<dbReference type="PharmGKB" id="PA134880209"/>
<dbReference type="VEuPathDB" id="HostDB:ENSG00000213185"/>
<dbReference type="eggNOG" id="ENOG502TEP5">
    <property type="taxonomic scope" value="Eukaryota"/>
</dbReference>
<dbReference type="GeneTree" id="ENSGT00940000163005"/>
<dbReference type="HOGENOM" id="CLU_160106_0_0_1"/>
<dbReference type="InParanoid" id="Q8N5W8"/>
<dbReference type="OMA" id="MFCIGGG"/>
<dbReference type="OrthoDB" id="9538849at2759"/>
<dbReference type="PAN-GO" id="Q8N5W8">
    <property type="GO annotations" value="0 GO annotations based on evolutionary models"/>
</dbReference>
<dbReference type="PhylomeDB" id="Q8N5W8"/>
<dbReference type="TreeFam" id="TF338384"/>
<dbReference type="PathwayCommons" id="Q8N5W8"/>
<dbReference type="SignaLink" id="Q8N5W8"/>
<dbReference type="BioGRID-ORCS" id="196792">
    <property type="hits" value="11 hits in 1083 CRISPR screens"/>
</dbReference>
<dbReference type="GenomeRNAi" id="196792"/>
<dbReference type="Pharos" id="Q8N5W8">
    <property type="development level" value="Tdark"/>
</dbReference>
<dbReference type="PRO" id="PR:Q8N5W8"/>
<dbReference type="Proteomes" id="UP000005640">
    <property type="component" value="Chromosome 10"/>
</dbReference>
<dbReference type="RNAct" id="Q8N5W8">
    <property type="molecule type" value="protein"/>
</dbReference>
<dbReference type="Bgee" id="ENSG00000213185">
    <property type="expression patterns" value="Expressed in oocyte and 150 other cell types or tissues"/>
</dbReference>
<dbReference type="GO" id="GO:0005576">
    <property type="term" value="C:extracellular region"/>
    <property type="evidence" value="ECO:0007669"/>
    <property type="project" value="UniProtKB-SubCell"/>
</dbReference>
<dbReference type="InterPro" id="IPR028122">
    <property type="entry name" value="FAM24"/>
</dbReference>
<dbReference type="PANTHER" id="PTHR35860">
    <property type="entry name" value="PROTEIN FAM24B"/>
    <property type="match status" value="1"/>
</dbReference>
<dbReference type="PANTHER" id="PTHR35860:SF5">
    <property type="entry name" value="PROTEIN FAM24B"/>
    <property type="match status" value="1"/>
</dbReference>
<dbReference type="Pfam" id="PF15193">
    <property type="entry name" value="FAM24"/>
    <property type="match status" value="1"/>
</dbReference>
<keyword id="KW-1267">Proteomics identification</keyword>
<keyword id="KW-1185">Reference proteome</keyword>
<keyword id="KW-0964">Secreted</keyword>
<keyword id="KW-0732">Signal</keyword>
<organism>
    <name type="scientific">Homo sapiens</name>
    <name type="common">Human</name>
    <dbReference type="NCBI Taxonomy" id="9606"/>
    <lineage>
        <taxon>Eukaryota</taxon>
        <taxon>Metazoa</taxon>
        <taxon>Chordata</taxon>
        <taxon>Craniata</taxon>
        <taxon>Vertebrata</taxon>
        <taxon>Euteleostomi</taxon>
        <taxon>Mammalia</taxon>
        <taxon>Eutheria</taxon>
        <taxon>Euarchontoglires</taxon>
        <taxon>Primates</taxon>
        <taxon>Haplorrhini</taxon>
        <taxon>Catarrhini</taxon>
        <taxon>Hominidae</taxon>
        <taxon>Homo</taxon>
    </lineage>
</organism>
<evidence type="ECO:0000255" key="1"/>
<evidence type="ECO:0000269" key="2">
    <source>
    </source>
</evidence>
<evidence type="ECO:0000305" key="3"/>
<reference key="1">
    <citation type="journal article" date="2007" name="BMC Genomics">
        <title>The full-ORF clone resource of the German cDNA consortium.</title>
        <authorList>
            <person name="Bechtel S."/>
            <person name="Rosenfelder H."/>
            <person name="Duda A."/>
            <person name="Schmidt C.P."/>
            <person name="Ernst U."/>
            <person name="Wellenreuther R."/>
            <person name="Mehrle A."/>
            <person name="Schuster C."/>
            <person name="Bahr A."/>
            <person name="Bloecker H."/>
            <person name="Heubner D."/>
            <person name="Hoerlein A."/>
            <person name="Michel G."/>
            <person name="Wedler H."/>
            <person name="Koehrer K."/>
            <person name="Ottenwaelder B."/>
            <person name="Poustka A."/>
            <person name="Wiemann S."/>
            <person name="Schupp I."/>
        </authorList>
    </citation>
    <scope>NUCLEOTIDE SEQUENCE [LARGE SCALE MRNA]</scope>
    <source>
        <tissue>Lymph node</tissue>
    </source>
</reference>
<reference key="2">
    <citation type="submission" date="2005-09" db="EMBL/GenBank/DDBJ databases">
        <authorList>
            <person name="Mural R.J."/>
            <person name="Istrail S."/>
            <person name="Sutton G.G."/>
            <person name="Florea L."/>
            <person name="Halpern A.L."/>
            <person name="Mobarry C.M."/>
            <person name="Lippert R."/>
            <person name="Walenz B."/>
            <person name="Shatkay H."/>
            <person name="Dew I."/>
            <person name="Miller J.R."/>
            <person name="Flanigan M.J."/>
            <person name="Edwards N.J."/>
            <person name="Bolanos R."/>
            <person name="Fasulo D."/>
            <person name="Halldorsson B.V."/>
            <person name="Hannenhalli S."/>
            <person name="Turner R."/>
            <person name="Yooseph S."/>
            <person name="Lu F."/>
            <person name="Nusskern D.R."/>
            <person name="Shue B.C."/>
            <person name="Zheng X.H."/>
            <person name="Zhong F."/>
            <person name="Delcher A.L."/>
            <person name="Huson D.H."/>
            <person name="Kravitz S.A."/>
            <person name="Mouchard L."/>
            <person name="Reinert K."/>
            <person name="Remington K.A."/>
            <person name="Clark A.G."/>
            <person name="Waterman M.S."/>
            <person name="Eichler E.E."/>
            <person name="Adams M.D."/>
            <person name="Hunkapiller M.W."/>
            <person name="Myers E.W."/>
            <person name="Venter J.C."/>
        </authorList>
    </citation>
    <scope>NUCLEOTIDE SEQUENCE [LARGE SCALE GENOMIC DNA]</scope>
</reference>
<reference key="3">
    <citation type="journal article" date="2004" name="Genome Res.">
        <title>The status, quality, and expansion of the NIH full-length cDNA project: the Mammalian Gene Collection (MGC).</title>
        <authorList>
            <consortium name="The MGC Project Team"/>
        </authorList>
    </citation>
    <scope>NUCLEOTIDE SEQUENCE [LARGE SCALE MRNA]</scope>
    <scope>VARIANT LEU-2</scope>
    <source>
        <tissue>Prostate</tissue>
    </source>
</reference>
<sequence length="94" mass="10147">MPVIAGGILAALLLLIVVVLCLYFKIHNALKAAKEPEAVAVKNHNPDKVWWAKNSQAKTIATESCPALQCCEGYRMCASFDSLPPCCCDINEGL</sequence>
<comment type="interaction">
    <interactant intactId="EBI-13383724">
        <id>Q8N5W8</id>
    </interactant>
    <interactant intactId="EBI-17274839">
        <id>P58418</id>
        <label>CLRN1</label>
    </interactant>
    <organismsDiffer>false</organismsDiffer>
    <experiments>3</experiments>
</comment>
<comment type="interaction">
    <interactant intactId="EBI-13383724">
        <id>Q8N5W8</id>
    </interactant>
    <interactant intactId="EBI-17490413">
        <id>A8MZ59</id>
        <label>LEUTX</label>
    </interactant>
    <organismsDiffer>false</organismsDiffer>
    <experiments>3</experiments>
</comment>
<comment type="subcellular location">
    <subcellularLocation>
        <location evidence="3">Secreted</location>
    </subcellularLocation>
</comment>
<comment type="similarity">
    <text evidence="3">Belongs to the FAM24 family.</text>
</comment>
<proteinExistence type="evidence at protein level"/>
<name>FA24B_HUMAN</name>
<feature type="signal peptide" evidence="1">
    <location>
        <begin position="1"/>
        <end position="21"/>
    </location>
</feature>
<feature type="chain" id="PRO_0000021224" description="Protein FAM24B">
    <location>
        <begin position="22"/>
        <end position="94"/>
    </location>
</feature>
<feature type="sequence variant" id="VAR_038485" description="In dbSNP:rs1891110." evidence="2">
    <original>P</original>
    <variation>L</variation>
    <location>
        <position position="2"/>
    </location>
</feature>
<gene>
    <name type="primary">FAM24B</name>
</gene>